<gene>
    <name evidence="1" type="primary">recX</name>
    <name type="ordered locus">SPN23F19240</name>
</gene>
<proteinExistence type="inferred from homology"/>
<reference key="1">
    <citation type="journal article" date="2009" name="J. Bacteriol.">
        <title>Role of conjugative elements in the evolution of the multidrug-resistant pandemic clone Streptococcus pneumoniae Spain23F ST81.</title>
        <authorList>
            <person name="Croucher N.J."/>
            <person name="Walker D."/>
            <person name="Romero P."/>
            <person name="Lennard N."/>
            <person name="Paterson G.K."/>
            <person name="Bason N.C."/>
            <person name="Mitchell A.M."/>
            <person name="Quail M.A."/>
            <person name="Andrew P.W."/>
            <person name="Parkhill J."/>
            <person name="Bentley S.D."/>
            <person name="Mitchell T.J."/>
        </authorList>
    </citation>
    <scope>NUCLEOTIDE SEQUENCE [LARGE SCALE GENOMIC DNA]</scope>
    <source>
        <strain>ATCC 700669 / Spain 23F-1</strain>
    </source>
</reference>
<name>RECX_STRPJ</name>
<feature type="chain" id="PRO_1000164027" description="Regulatory protein RecX">
    <location>
        <begin position="1"/>
        <end position="258"/>
    </location>
</feature>
<organism>
    <name type="scientific">Streptococcus pneumoniae (strain ATCC 700669 / Spain 23F-1)</name>
    <dbReference type="NCBI Taxonomy" id="561276"/>
    <lineage>
        <taxon>Bacteria</taxon>
        <taxon>Bacillati</taxon>
        <taxon>Bacillota</taxon>
        <taxon>Bacilli</taxon>
        <taxon>Lactobacillales</taxon>
        <taxon>Streptococcaceae</taxon>
        <taxon>Streptococcus</taxon>
    </lineage>
</organism>
<evidence type="ECO:0000255" key="1">
    <source>
        <dbReference type="HAMAP-Rule" id="MF_01114"/>
    </source>
</evidence>
<comment type="function">
    <text evidence="1">Modulates RecA activity.</text>
</comment>
<comment type="subcellular location">
    <subcellularLocation>
        <location evidence="1">Cytoplasm</location>
    </subcellularLocation>
</comment>
<comment type="similarity">
    <text evidence="1">Belongs to the RecX family.</text>
</comment>
<protein>
    <recommendedName>
        <fullName evidence="1">Regulatory protein RecX</fullName>
    </recommendedName>
</protein>
<keyword id="KW-0963">Cytoplasm</keyword>
<sequence>MKITKLEKKKRLYLMELDNGDKCYITEDTIVRFMLSRDKVISEEELKEIQDFAQFSYGKNLALYHLSFKARTEKEVREYLKKYDIDKNIVSQVIANLKEDKWINDGQYAYAIINTNQLSGDKGPYVLTQKLSQKGISKSTIEENLKEFDFSEVAQRVANKLLKKYEGKLPARALQDKIIQNLTNKGFSYSDAKIAFDDLDSQVDQETTQELIFKELDKQYTKYARKYEGYELKQRLTQVLARKGYDFSDIASALREYL</sequence>
<accession>B8ZNK7</accession>
<dbReference type="EMBL" id="FM211187">
    <property type="protein sequence ID" value="CAR69680.1"/>
    <property type="molecule type" value="Genomic_DNA"/>
</dbReference>
<dbReference type="RefSeq" id="WP_000705101.1">
    <property type="nucleotide sequence ID" value="NC_011900.1"/>
</dbReference>
<dbReference type="SMR" id="B8ZNK7"/>
<dbReference type="KEGG" id="sne:SPN23F19240"/>
<dbReference type="HOGENOM" id="CLU_066607_4_0_9"/>
<dbReference type="GO" id="GO:0005737">
    <property type="term" value="C:cytoplasm"/>
    <property type="evidence" value="ECO:0007669"/>
    <property type="project" value="UniProtKB-SubCell"/>
</dbReference>
<dbReference type="GO" id="GO:0006282">
    <property type="term" value="P:regulation of DNA repair"/>
    <property type="evidence" value="ECO:0007669"/>
    <property type="project" value="UniProtKB-UniRule"/>
</dbReference>
<dbReference type="Gene3D" id="1.10.10.10">
    <property type="entry name" value="Winged helix-like DNA-binding domain superfamily/Winged helix DNA-binding domain"/>
    <property type="match status" value="4"/>
</dbReference>
<dbReference type="HAMAP" id="MF_01114">
    <property type="entry name" value="RecX"/>
    <property type="match status" value="1"/>
</dbReference>
<dbReference type="InterPro" id="IPR053926">
    <property type="entry name" value="RecX_HTH_1st"/>
</dbReference>
<dbReference type="InterPro" id="IPR053924">
    <property type="entry name" value="RecX_HTH_2nd"/>
</dbReference>
<dbReference type="InterPro" id="IPR053925">
    <property type="entry name" value="RecX_HTH_3rd"/>
</dbReference>
<dbReference type="InterPro" id="IPR003783">
    <property type="entry name" value="Regulatory_RecX"/>
</dbReference>
<dbReference type="InterPro" id="IPR036388">
    <property type="entry name" value="WH-like_DNA-bd_sf"/>
</dbReference>
<dbReference type="NCBIfam" id="NF010733">
    <property type="entry name" value="PRK14135.1"/>
    <property type="match status" value="1"/>
</dbReference>
<dbReference type="PANTHER" id="PTHR33602">
    <property type="entry name" value="REGULATORY PROTEIN RECX FAMILY PROTEIN"/>
    <property type="match status" value="1"/>
</dbReference>
<dbReference type="PANTHER" id="PTHR33602:SF1">
    <property type="entry name" value="REGULATORY PROTEIN RECX FAMILY PROTEIN"/>
    <property type="match status" value="1"/>
</dbReference>
<dbReference type="Pfam" id="PF21982">
    <property type="entry name" value="RecX_HTH1"/>
    <property type="match status" value="1"/>
</dbReference>
<dbReference type="Pfam" id="PF02631">
    <property type="entry name" value="RecX_HTH2"/>
    <property type="match status" value="1"/>
</dbReference>
<dbReference type="Pfam" id="PF21981">
    <property type="entry name" value="RecX_HTH3"/>
    <property type="match status" value="1"/>
</dbReference>